<sequence length="380" mass="42536">MGIHGLAKLIADHAPSAIKEHEIKSYFGRKIAIDASMCIYQFLIAVRQDGNVLQNEDGETTSHLMGMFYRTIRMLESGIKPVYVFDGKPPQLKSGELEKRVERRAEAEKLLAQAQEAGEQENIDKFSKRLVKVTKQHNEECKKLLSLMGVPYIEAPCEAEASCAALVKAGKVYATATEDMDGLTFGTTVLLRHLTASEAKKLPIQEFHFSRILQDMELTHQQFIDLCILLGCDYCGTIKGIGPKRAIDLIKQHGSIEEILENIDPNKHPAPEDWLYKEARGLFLEPEVVDGTSVDLKWNEPDEDGLIQFMCAEKQFSEDRIRNGCKKITKSRQGSTQGRLDTFFTVTGSISSKRKEPETKGSAKKKQKTSATPGKFKKGK</sequence>
<comment type="function">
    <text evidence="1">Structure-specific nuclease with 5'-flap endonuclease and 5'-3' exonuclease activities involved in DNA replication and repair. During DNA replication, cleaves the 5'-overhanging flap structure that is generated by displacement synthesis when DNA polymerase encounters the 5'-end of a downstream Okazaki fragment. It enters the flap from the 5'-end and then tracks to cleave the flap base, leaving a nick for ligation. Also involved in the long patch base excision repair (LP-BER) pathway, by cleaving within the apurinic/apyrimidinic (AP) site-terminated flap. Acts as a genome stabilization factor that prevents flaps from equilibrating into structures that lead to duplications and deletions. Also possesses 5'-3' exonuclease activity on nicked or gapped double-stranded DNA, and exhibits RNase H activity. Also involved in replication and repair of rDNA and in repairing mitochondrial DNA.</text>
</comment>
<comment type="cofactor">
    <cofactor evidence="1">
        <name>Mg(2+)</name>
        <dbReference type="ChEBI" id="CHEBI:18420"/>
    </cofactor>
    <text evidence="1">Binds 2 magnesium ions per subunit. They probably participate in the reaction catalyzed by the enzyme. May bind an additional third magnesium ion after substrate binding.</text>
</comment>
<comment type="subunit">
    <text evidence="1">Interacts with PCNA. Three molecules of fen1 bind to one PCNA trimer with each molecule binding to one PCNA monomer. PCNA stimulates the nuclease activity without altering cleavage specificity.</text>
</comment>
<comment type="subcellular location">
    <subcellularLocation>
        <location evidence="1">Nucleus</location>
        <location evidence="1">Nucleolus</location>
    </subcellularLocation>
    <subcellularLocation>
        <location evidence="1">Nucleus</location>
        <location evidence="1">Nucleoplasm</location>
    </subcellularLocation>
    <subcellularLocation>
        <location evidence="1">Mitochondrion</location>
    </subcellularLocation>
    <text evidence="1">Resides mostly in the nucleoli and relocalizes to the nucleoplasm upon DNA damage.</text>
</comment>
<comment type="alternative products">
    <event type="alternative splicing"/>
    <isoform>
        <id>Q6TNU4-1</id>
        <name>1</name>
        <sequence type="displayed"/>
    </isoform>
    <isoform>
        <id>Q6TNU4-2</id>
        <name>2</name>
        <sequence type="described" ref="VSP_040394"/>
    </isoform>
</comment>
<comment type="PTM">
    <text evidence="1">Phosphorylated. Phosphorylation upon DNA damage induces relocalization to the nuclear plasma.</text>
</comment>
<comment type="similarity">
    <text evidence="1">Belongs to the XPG/RAD2 endonuclease family. FEN1 subfamily.</text>
</comment>
<proteinExistence type="evidence at transcript level"/>
<organism>
    <name type="scientific">Danio rerio</name>
    <name type="common">Zebrafish</name>
    <name type="synonym">Brachydanio rerio</name>
    <dbReference type="NCBI Taxonomy" id="7955"/>
    <lineage>
        <taxon>Eukaryota</taxon>
        <taxon>Metazoa</taxon>
        <taxon>Chordata</taxon>
        <taxon>Craniata</taxon>
        <taxon>Vertebrata</taxon>
        <taxon>Euteleostomi</taxon>
        <taxon>Actinopterygii</taxon>
        <taxon>Neopterygii</taxon>
        <taxon>Teleostei</taxon>
        <taxon>Ostariophysi</taxon>
        <taxon>Cypriniformes</taxon>
        <taxon>Danionidae</taxon>
        <taxon>Danioninae</taxon>
        <taxon>Danio</taxon>
    </lineage>
</organism>
<protein>
    <recommendedName>
        <fullName evidence="1">Flap endonuclease 1</fullName>
        <shortName evidence="1">FEN-1</shortName>
        <ecNumber evidence="1">3.1.-.-</ecNumber>
    </recommendedName>
    <alternativeName>
        <fullName evidence="1">Flap structure-specific endonuclease 1</fullName>
    </alternativeName>
</protein>
<reference key="1">
    <citation type="journal article" date="2004" name="Proc. Natl. Acad. Sci. U.S.A.">
        <title>Hematopoietic gene expression profile in zebrafish kidney marrow.</title>
        <authorList>
            <person name="Song H.-D."/>
            <person name="Sun X.-J."/>
            <person name="Deng M."/>
            <person name="Zhang G.-W."/>
            <person name="Zhou Y."/>
            <person name="Wu X.-Y."/>
            <person name="Sheng Y."/>
            <person name="Chen Y."/>
            <person name="Ruan Z."/>
            <person name="Jiang C.-L."/>
            <person name="Fan H.-Y."/>
            <person name="Zon L.I."/>
            <person name="Kanki J.P."/>
            <person name="Liu T.X."/>
            <person name="Look A.T."/>
            <person name="Chen Z."/>
        </authorList>
    </citation>
    <scope>NUCLEOTIDE SEQUENCE [LARGE SCALE MRNA] (ISOFORM 1)</scope>
    <source>
        <tissue>Kidney marrow</tissue>
    </source>
</reference>
<reference key="2">
    <citation type="journal article" date="2004" name="Proc. Natl. Acad. Sci. U.S.A.">
        <title>Identification of 315 genes essential for early zebrafish development.</title>
        <authorList>
            <person name="Amsterdam A."/>
            <person name="Nissen R.M."/>
            <person name="Sun Z."/>
            <person name="Swindell E.C."/>
            <person name="Farrington S."/>
            <person name="Hopkins N."/>
        </authorList>
    </citation>
    <scope>NUCLEOTIDE SEQUENCE [LARGE SCALE MRNA] (ISOFORM 1)</scope>
</reference>
<reference key="3">
    <citation type="submission" date="2004-06" db="EMBL/GenBank/DDBJ databases">
        <authorList>
            <consortium name="NIH - Zebrafish Gene Collection (ZGC) project"/>
        </authorList>
    </citation>
    <scope>NUCLEOTIDE SEQUENCE [LARGE SCALE MRNA] (ISOFORMS 1 AND 2)</scope>
    <source>
        <tissue>Embryo</tissue>
    </source>
</reference>
<evidence type="ECO:0000255" key="1">
    <source>
        <dbReference type="HAMAP-Rule" id="MF_03140"/>
    </source>
</evidence>
<evidence type="ECO:0000256" key="2">
    <source>
        <dbReference type="SAM" id="MobiDB-lite"/>
    </source>
</evidence>
<evidence type="ECO:0000303" key="3">
    <source ref="3"/>
</evidence>
<evidence type="ECO:0000305" key="4"/>
<accession>Q6TNU4</accession>
<accession>Q6DRB5</accession>
<accession>Q7ZWH1</accession>
<feature type="chain" id="PRO_0000403488" description="Flap endonuclease 1">
    <location>
        <begin position="1"/>
        <end position="380"/>
    </location>
</feature>
<feature type="region of interest" description="N-domain">
    <location>
        <begin position="1"/>
        <end position="104"/>
    </location>
</feature>
<feature type="region of interest" description="I-domain">
    <location>
        <begin position="122"/>
        <end position="253"/>
    </location>
</feature>
<feature type="region of interest" description="Interaction with PCNA" evidence="1">
    <location>
        <begin position="336"/>
        <end position="344"/>
    </location>
</feature>
<feature type="region of interest" description="Disordered" evidence="2">
    <location>
        <begin position="346"/>
        <end position="380"/>
    </location>
</feature>
<feature type="binding site" evidence="1">
    <location>
        <position position="34"/>
    </location>
    <ligand>
        <name>Mg(2+)</name>
        <dbReference type="ChEBI" id="CHEBI:18420"/>
        <label>1</label>
    </ligand>
</feature>
<feature type="binding site" evidence="1">
    <location>
        <position position="47"/>
    </location>
    <ligand>
        <name>DNA</name>
        <dbReference type="ChEBI" id="CHEBI:16991"/>
    </ligand>
</feature>
<feature type="binding site" evidence="1">
    <location>
        <position position="70"/>
    </location>
    <ligand>
        <name>DNA</name>
        <dbReference type="ChEBI" id="CHEBI:16991"/>
    </ligand>
</feature>
<feature type="binding site" evidence="1">
    <location>
        <position position="86"/>
    </location>
    <ligand>
        <name>Mg(2+)</name>
        <dbReference type="ChEBI" id="CHEBI:18420"/>
        <label>1</label>
    </ligand>
</feature>
<feature type="binding site" evidence="1">
    <location>
        <position position="158"/>
    </location>
    <ligand>
        <name>DNA</name>
        <dbReference type="ChEBI" id="CHEBI:16991"/>
    </ligand>
</feature>
<feature type="binding site" evidence="1">
    <location>
        <position position="158"/>
    </location>
    <ligand>
        <name>Mg(2+)</name>
        <dbReference type="ChEBI" id="CHEBI:18420"/>
        <label>1</label>
    </ligand>
</feature>
<feature type="binding site" evidence="1">
    <location>
        <position position="160"/>
    </location>
    <ligand>
        <name>Mg(2+)</name>
        <dbReference type="ChEBI" id="CHEBI:18420"/>
        <label>1</label>
    </ligand>
</feature>
<feature type="binding site" evidence="1">
    <location>
        <position position="179"/>
    </location>
    <ligand>
        <name>Mg(2+)</name>
        <dbReference type="ChEBI" id="CHEBI:18420"/>
        <label>2</label>
    </ligand>
</feature>
<feature type="binding site" evidence="1">
    <location>
        <position position="181"/>
    </location>
    <ligand>
        <name>Mg(2+)</name>
        <dbReference type="ChEBI" id="CHEBI:18420"/>
        <label>2</label>
    </ligand>
</feature>
<feature type="binding site" evidence="1">
    <location>
        <position position="231"/>
    </location>
    <ligand>
        <name>DNA</name>
        <dbReference type="ChEBI" id="CHEBI:16991"/>
    </ligand>
</feature>
<feature type="binding site" evidence="1">
    <location>
        <position position="233"/>
    </location>
    <ligand>
        <name>DNA</name>
        <dbReference type="ChEBI" id="CHEBI:16991"/>
    </ligand>
</feature>
<feature type="binding site" evidence="1">
    <location>
        <position position="233"/>
    </location>
    <ligand>
        <name>Mg(2+)</name>
        <dbReference type="ChEBI" id="CHEBI:18420"/>
        <label>2</label>
    </ligand>
</feature>
<feature type="splice variant" id="VSP_040394" description="In isoform 2." evidence="3">
    <original>FIDLCILLGCDYCGTIKGIGPKRAIDLIKQHGSIEEILENIDPNKHPAPEDWLYKEARGLFLEPEVVDGTSVDLKWNEPDEDGLIQFMCAEKQFSEDRIRNGCKKITKSRQGSTQGRLDTFFTVTGSISSKRKEPETKGSAKKKQKTSATPGKFKKGK</original>
    <variation>AVDTSVGQASSQQLVLTSQSISQSNNQQPVHGSSVFTAKPSGLTPLKPHKGRHQLGFMLPSSTSTLHTPSSSFVVQTPSQIPVQDSYISGVQSASQKSGQTSYLSVAL</variation>
    <location>
        <begin position="223"/>
        <end position="380"/>
    </location>
</feature>
<feature type="sequence conflict" description="In Ref. 2; AAT68162." evidence="4" ref="2">
    <original>D</original>
    <variation>A</variation>
    <location>
        <position position="181"/>
    </location>
</feature>
<feature type="sequence conflict" description="In Ref. 2; AAT68162." evidence="4" ref="2">
    <original>P</original>
    <variation>R</variation>
    <location>
        <position position="269"/>
    </location>
</feature>
<dbReference type="EC" id="3.1.-.-" evidence="1"/>
<dbReference type="EMBL" id="AY391423">
    <property type="protein sequence ID" value="AAQ91235.1"/>
    <property type="molecule type" value="mRNA"/>
</dbReference>
<dbReference type="EMBL" id="AY648844">
    <property type="protein sequence ID" value="AAT68162.1"/>
    <property type="molecule type" value="mRNA"/>
</dbReference>
<dbReference type="EMBL" id="BC049413">
    <property type="protein sequence ID" value="AAH49413.1"/>
    <property type="molecule type" value="mRNA"/>
</dbReference>
<dbReference type="EMBL" id="BC071488">
    <property type="protein sequence ID" value="AAH71488.1"/>
    <property type="molecule type" value="mRNA"/>
</dbReference>
<dbReference type="RefSeq" id="NP_001315436.1">
    <molecule id="Q6TNU4-1"/>
    <property type="nucleotide sequence ID" value="NM_001328507.1"/>
</dbReference>
<dbReference type="RefSeq" id="XP_017209293.1">
    <molecule id="Q6TNU4-1"/>
    <property type="nucleotide sequence ID" value="XM_017353804.2"/>
</dbReference>
<dbReference type="SMR" id="Q6TNU4"/>
<dbReference type="FunCoup" id="Q6TNU4">
    <property type="interactions" value="2279"/>
</dbReference>
<dbReference type="STRING" id="7955.ENSDARP00000144222"/>
<dbReference type="PaxDb" id="7955-ENSDARP00000004016"/>
<dbReference type="Ensembl" id="ENSDART00000024224">
    <molecule id="Q6TNU4-1"/>
    <property type="protein sequence ID" value="ENSDARP00000004016"/>
    <property type="gene ID" value="ENSDARG00000011404"/>
</dbReference>
<dbReference type="Ensembl" id="ENSDART00000178622">
    <molecule id="Q6TNU4-1"/>
    <property type="protein sequence ID" value="ENSDARP00000144222"/>
    <property type="gene ID" value="ENSDARG00000011404"/>
</dbReference>
<dbReference type="GeneID" id="386707"/>
<dbReference type="KEGG" id="dre:386707"/>
<dbReference type="AGR" id="ZFIN:ZDB-GENE-031112-11"/>
<dbReference type="CTD" id="2237"/>
<dbReference type="ZFIN" id="ZDB-GENE-031112-11">
    <property type="gene designation" value="fen1"/>
</dbReference>
<dbReference type="eggNOG" id="KOG2519">
    <property type="taxonomic scope" value="Eukaryota"/>
</dbReference>
<dbReference type="HOGENOM" id="CLU_032444_2_0_1"/>
<dbReference type="InParanoid" id="Q6TNU4"/>
<dbReference type="OMA" id="MGIPWVQ"/>
<dbReference type="OrthoDB" id="1937206at2759"/>
<dbReference type="PhylomeDB" id="Q6TNU4"/>
<dbReference type="TreeFam" id="TF105701"/>
<dbReference type="Reactome" id="R-DRE-110362">
    <property type="pathway name" value="POLB-Dependent Long Patch Base Excision Repair"/>
</dbReference>
<dbReference type="PRO" id="PR:Q6TNU4"/>
<dbReference type="Proteomes" id="UP000000437">
    <property type="component" value="Chromosome 24"/>
</dbReference>
<dbReference type="Bgee" id="ENSDARG00000011404">
    <property type="expression patterns" value="Expressed in somite and 39 other cell types or tissues"/>
</dbReference>
<dbReference type="GO" id="GO:0005739">
    <property type="term" value="C:mitochondrion"/>
    <property type="evidence" value="ECO:0007669"/>
    <property type="project" value="UniProtKB-SubCell"/>
</dbReference>
<dbReference type="GO" id="GO:0005730">
    <property type="term" value="C:nucleolus"/>
    <property type="evidence" value="ECO:0007669"/>
    <property type="project" value="UniProtKB-SubCell"/>
</dbReference>
<dbReference type="GO" id="GO:0005654">
    <property type="term" value="C:nucleoplasm"/>
    <property type="evidence" value="ECO:0007669"/>
    <property type="project" value="UniProtKB-SubCell"/>
</dbReference>
<dbReference type="GO" id="GO:0005634">
    <property type="term" value="C:nucleus"/>
    <property type="evidence" value="ECO:0000318"/>
    <property type="project" value="GO_Central"/>
</dbReference>
<dbReference type="GO" id="GO:0008409">
    <property type="term" value="F:5'-3' exonuclease activity"/>
    <property type="evidence" value="ECO:0000318"/>
    <property type="project" value="GO_Central"/>
</dbReference>
<dbReference type="GO" id="GO:0017108">
    <property type="term" value="F:5'-flap endonuclease activity"/>
    <property type="evidence" value="ECO:0000318"/>
    <property type="project" value="GO_Central"/>
</dbReference>
<dbReference type="GO" id="GO:0003677">
    <property type="term" value="F:DNA binding"/>
    <property type="evidence" value="ECO:0007669"/>
    <property type="project" value="UniProtKB-UniRule"/>
</dbReference>
<dbReference type="GO" id="GO:0000287">
    <property type="term" value="F:magnesium ion binding"/>
    <property type="evidence" value="ECO:0000318"/>
    <property type="project" value="GO_Central"/>
</dbReference>
<dbReference type="GO" id="GO:0030145">
    <property type="term" value="F:manganese ion binding"/>
    <property type="evidence" value="ECO:0000318"/>
    <property type="project" value="GO_Central"/>
</dbReference>
<dbReference type="GO" id="GO:0004523">
    <property type="term" value="F:RNA-DNA hybrid ribonuclease activity"/>
    <property type="evidence" value="ECO:0000318"/>
    <property type="project" value="GO_Central"/>
</dbReference>
<dbReference type="GO" id="GO:0006284">
    <property type="term" value="P:base-excision repair"/>
    <property type="evidence" value="ECO:0007669"/>
    <property type="project" value="UniProtKB-UniRule"/>
</dbReference>
<dbReference type="GO" id="GO:0043137">
    <property type="term" value="P:DNA replication, removal of RNA primer"/>
    <property type="evidence" value="ECO:0007669"/>
    <property type="project" value="UniProtKB-UniRule"/>
</dbReference>
<dbReference type="GO" id="GO:0060041">
    <property type="term" value="P:retina development in camera-type eye"/>
    <property type="evidence" value="ECO:0000315"/>
    <property type="project" value="ZFIN"/>
</dbReference>
<dbReference type="CDD" id="cd09867">
    <property type="entry name" value="PIN_FEN1"/>
    <property type="match status" value="1"/>
</dbReference>
<dbReference type="FunFam" id="1.10.150.20:FF:000009">
    <property type="entry name" value="Flap endonuclease 1"/>
    <property type="match status" value="1"/>
</dbReference>
<dbReference type="FunFam" id="3.40.50.1010:FF:000003">
    <property type="entry name" value="Flap endonuclease 1"/>
    <property type="match status" value="1"/>
</dbReference>
<dbReference type="Gene3D" id="1.10.150.20">
    <property type="entry name" value="5' to 3' exonuclease, C-terminal subdomain"/>
    <property type="match status" value="1"/>
</dbReference>
<dbReference type="Gene3D" id="3.40.50.1010">
    <property type="entry name" value="5'-nuclease"/>
    <property type="match status" value="1"/>
</dbReference>
<dbReference type="HAMAP" id="MF_00614">
    <property type="entry name" value="Fen"/>
    <property type="match status" value="1"/>
</dbReference>
<dbReference type="InterPro" id="IPR036279">
    <property type="entry name" value="5-3_exonuclease_C_sf"/>
</dbReference>
<dbReference type="InterPro" id="IPR023426">
    <property type="entry name" value="Flap_endonuc"/>
</dbReference>
<dbReference type="InterPro" id="IPR008918">
    <property type="entry name" value="HhH2"/>
</dbReference>
<dbReference type="InterPro" id="IPR029060">
    <property type="entry name" value="PIN-like_dom_sf"/>
</dbReference>
<dbReference type="InterPro" id="IPR006086">
    <property type="entry name" value="XPG-I_dom"/>
</dbReference>
<dbReference type="InterPro" id="IPR006084">
    <property type="entry name" value="XPG/Rad2"/>
</dbReference>
<dbReference type="InterPro" id="IPR019974">
    <property type="entry name" value="XPG_CS"/>
</dbReference>
<dbReference type="InterPro" id="IPR006085">
    <property type="entry name" value="XPG_DNA_repair_N"/>
</dbReference>
<dbReference type="PANTHER" id="PTHR11081:SF51">
    <property type="entry name" value="FLAP ENDONUCLEASE 1"/>
    <property type="match status" value="1"/>
</dbReference>
<dbReference type="PANTHER" id="PTHR11081">
    <property type="entry name" value="FLAP ENDONUCLEASE FAMILY MEMBER"/>
    <property type="match status" value="1"/>
</dbReference>
<dbReference type="Pfam" id="PF00867">
    <property type="entry name" value="XPG_I"/>
    <property type="match status" value="1"/>
</dbReference>
<dbReference type="Pfam" id="PF00752">
    <property type="entry name" value="XPG_N"/>
    <property type="match status" value="1"/>
</dbReference>
<dbReference type="PRINTS" id="PR00853">
    <property type="entry name" value="XPGRADSUPER"/>
</dbReference>
<dbReference type="SMART" id="SM00279">
    <property type="entry name" value="HhH2"/>
    <property type="match status" value="1"/>
</dbReference>
<dbReference type="SMART" id="SM00484">
    <property type="entry name" value="XPGI"/>
    <property type="match status" value="1"/>
</dbReference>
<dbReference type="SMART" id="SM00485">
    <property type="entry name" value="XPGN"/>
    <property type="match status" value="1"/>
</dbReference>
<dbReference type="SUPFAM" id="SSF47807">
    <property type="entry name" value="5' to 3' exonuclease, C-terminal subdomain"/>
    <property type="match status" value="1"/>
</dbReference>
<dbReference type="SUPFAM" id="SSF88723">
    <property type="entry name" value="PIN domain-like"/>
    <property type="match status" value="1"/>
</dbReference>
<dbReference type="PROSITE" id="PS00841">
    <property type="entry name" value="XPG_1"/>
    <property type="match status" value="1"/>
</dbReference>
<dbReference type="PROSITE" id="PS00842">
    <property type="entry name" value="XPG_2"/>
    <property type="match status" value="1"/>
</dbReference>
<keyword id="KW-0025">Alternative splicing</keyword>
<keyword id="KW-0227">DNA damage</keyword>
<keyword id="KW-0234">DNA repair</keyword>
<keyword id="KW-0235">DNA replication</keyword>
<keyword id="KW-0255">Endonuclease</keyword>
<keyword id="KW-0269">Exonuclease</keyword>
<keyword id="KW-0378">Hydrolase</keyword>
<keyword id="KW-0460">Magnesium</keyword>
<keyword id="KW-0479">Metal-binding</keyword>
<keyword id="KW-0496">Mitochondrion</keyword>
<keyword id="KW-0540">Nuclease</keyword>
<keyword id="KW-0539">Nucleus</keyword>
<keyword id="KW-0597">Phosphoprotein</keyword>
<keyword id="KW-1185">Reference proteome</keyword>
<name>FEN1A_DANRE</name>
<gene>
    <name type="primary">fen1</name>
</gene>